<reference key="1">
    <citation type="submission" date="1997-05" db="EMBL/GenBank/DDBJ databases">
        <authorList>
            <person name="Segarra R.A."/>
            <person name="Iandolo J.J."/>
        </authorList>
    </citation>
    <scope>NUCLEOTIDE SEQUENCE [GENOMIC DNA]</scope>
</reference>
<reference key="2">
    <citation type="book" date="2006" name="Gram positive pathogens, 2nd edition">
        <title>The Staphylococcus aureus NCTC 8325 genome.</title>
        <editorList>
            <person name="Fischetti V."/>
            <person name="Novick R."/>
            <person name="Ferretti J."/>
            <person name="Portnoy D."/>
            <person name="Rood J."/>
        </editorList>
        <authorList>
            <person name="Gillaspy A.F."/>
            <person name="Worrell V."/>
            <person name="Orvis J."/>
            <person name="Roe B.A."/>
            <person name="Dyer D.W."/>
            <person name="Iandolo J.J."/>
        </authorList>
    </citation>
    <scope>NUCLEOTIDE SEQUENCE [LARGE SCALE GENOMIC DNA]</scope>
    <source>
        <strain>NCTC 8325 / PS 47</strain>
    </source>
</reference>
<dbReference type="EMBL" id="U96619">
    <property type="protein sequence ID" value="AAB54017.1"/>
    <property type="molecule type" value="Genomic_DNA"/>
</dbReference>
<dbReference type="EMBL" id="CP000253">
    <property type="protein sequence ID" value="ABD29665.1"/>
    <property type="status" value="ALT_INIT"/>
    <property type="molecule type" value="Genomic_DNA"/>
</dbReference>
<dbReference type="RefSeq" id="WP_001074473.1">
    <property type="nucleotide sequence ID" value="NZ_LS483365.1"/>
</dbReference>
<dbReference type="RefSeq" id="YP_499089.2">
    <property type="nucleotide sequence ID" value="NC_007795.1"/>
</dbReference>
<dbReference type="SMR" id="P0A0I4"/>
<dbReference type="STRING" id="93061.SAOUHSC_00516"/>
<dbReference type="PaxDb" id="1280-SAXN108_0589"/>
<dbReference type="GeneID" id="3920370"/>
<dbReference type="GeneID" id="98344869"/>
<dbReference type="KEGG" id="sao:SAOUHSC_00516"/>
<dbReference type="PATRIC" id="fig|93061.5.peg.463"/>
<dbReference type="eggNOG" id="COG0690">
    <property type="taxonomic scope" value="Bacteria"/>
</dbReference>
<dbReference type="HOGENOM" id="CLU_113663_5_1_9"/>
<dbReference type="OrthoDB" id="9813233at2"/>
<dbReference type="PRO" id="PR:P0A0I4"/>
<dbReference type="Proteomes" id="UP000008816">
    <property type="component" value="Chromosome"/>
</dbReference>
<dbReference type="GO" id="GO:0005886">
    <property type="term" value="C:plasma membrane"/>
    <property type="evidence" value="ECO:0000318"/>
    <property type="project" value="GO_Central"/>
</dbReference>
<dbReference type="GO" id="GO:0008320">
    <property type="term" value="F:protein transmembrane transporter activity"/>
    <property type="evidence" value="ECO:0000318"/>
    <property type="project" value="GO_Central"/>
</dbReference>
<dbReference type="GO" id="GO:0065002">
    <property type="term" value="P:intracellular protein transmembrane transport"/>
    <property type="evidence" value="ECO:0007669"/>
    <property type="project" value="UniProtKB-UniRule"/>
</dbReference>
<dbReference type="GO" id="GO:0009306">
    <property type="term" value="P:protein secretion"/>
    <property type="evidence" value="ECO:0007669"/>
    <property type="project" value="UniProtKB-UniRule"/>
</dbReference>
<dbReference type="GO" id="GO:0006605">
    <property type="term" value="P:protein targeting"/>
    <property type="evidence" value="ECO:0007669"/>
    <property type="project" value="UniProtKB-UniRule"/>
</dbReference>
<dbReference type="GO" id="GO:0043952">
    <property type="term" value="P:protein transport by the Sec complex"/>
    <property type="evidence" value="ECO:0000318"/>
    <property type="project" value="GO_Central"/>
</dbReference>
<dbReference type="Gene3D" id="1.20.5.1030">
    <property type="entry name" value="Preprotein translocase secy subunit"/>
    <property type="match status" value="1"/>
</dbReference>
<dbReference type="HAMAP" id="MF_00422">
    <property type="entry name" value="SecE"/>
    <property type="match status" value="1"/>
</dbReference>
<dbReference type="InterPro" id="IPR005807">
    <property type="entry name" value="SecE_bac"/>
</dbReference>
<dbReference type="InterPro" id="IPR038379">
    <property type="entry name" value="SecE_sf"/>
</dbReference>
<dbReference type="InterPro" id="IPR001901">
    <property type="entry name" value="Translocase_SecE/Sec61-g"/>
</dbReference>
<dbReference type="NCBIfam" id="TIGR00964">
    <property type="entry name" value="secE_bact"/>
    <property type="match status" value="1"/>
</dbReference>
<dbReference type="PANTHER" id="PTHR33910">
    <property type="entry name" value="PROTEIN TRANSLOCASE SUBUNIT SECE"/>
    <property type="match status" value="1"/>
</dbReference>
<dbReference type="PANTHER" id="PTHR33910:SF1">
    <property type="entry name" value="PROTEIN TRANSLOCASE SUBUNIT SECE"/>
    <property type="match status" value="1"/>
</dbReference>
<dbReference type="Pfam" id="PF00584">
    <property type="entry name" value="SecE"/>
    <property type="match status" value="1"/>
</dbReference>
<dbReference type="PROSITE" id="PS01067">
    <property type="entry name" value="SECE_SEC61G"/>
    <property type="match status" value="1"/>
</dbReference>
<evidence type="ECO:0000255" key="1">
    <source>
        <dbReference type="HAMAP-Rule" id="MF_00422"/>
    </source>
</evidence>
<evidence type="ECO:0000305" key="2"/>
<feature type="chain" id="PRO_0000104179" description="Protein translocase subunit SecE">
    <location>
        <begin position="1"/>
        <end position="60"/>
    </location>
</feature>
<feature type="transmembrane region" description="Helical" evidence="1">
    <location>
        <begin position="31"/>
        <end position="51"/>
    </location>
</feature>
<sequence>MAKKESFFKGVKSEMEKTSWPTKEELFKYTVIVVSTVIFFLVFFYALDLGITALKNLLFG</sequence>
<gene>
    <name evidence="1" type="primary">secE</name>
    <name type="ordered locus">SAOUHSC_00516</name>
</gene>
<keyword id="KW-1003">Cell membrane</keyword>
<keyword id="KW-0472">Membrane</keyword>
<keyword id="KW-0653">Protein transport</keyword>
<keyword id="KW-1185">Reference proteome</keyword>
<keyword id="KW-0811">Translocation</keyword>
<keyword id="KW-0812">Transmembrane</keyword>
<keyword id="KW-1133">Transmembrane helix</keyword>
<keyword id="KW-0813">Transport</keyword>
<name>SECE_STAA8</name>
<proteinExistence type="inferred from homology"/>
<accession>P0A0I4</accession>
<accession>O06442</accession>
<accession>Q2G0P3</accession>
<organism>
    <name type="scientific">Staphylococcus aureus (strain NCTC 8325 / PS 47)</name>
    <dbReference type="NCBI Taxonomy" id="93061"/>
    <lineage>
        <taxon>Bacteria</taxon>
        <taxon>Bacillati</taxon>
        <taxon>Bacillota</taxon>
        <taxon>Bacilli</taxon>
        <taxon>Bacillales</taxon>
        <taxon>Staphylococcaceae</taxon>
        <taxon>Staphylococcus</taxon>
    </lineage>
</organism>
<protein>
    <recommendedName>
        <fullName evidence="1">Protein translocase subunit SecE</fullName>
    </recommendedName>
</protein>
<comment type="function">
    <text evidence="1">Essential subunit of the Sec protein translocation channel SecYEG. Clamps together the 2 halves of SecY. May contact the channel plug during translocation.</text>
</comment>
<comment type="subunit">
    <text evidence="1">Component of the Sec protein translocase complex. Heterotrimer consisting of SecY, SecE and SecG subunits. The heterotrimers can form oligomers, although 1 heterotrimer is thought to be able to translocate proteins. Interacts with the ribosome. Interacts with SecDF, and other proteins may be involved. Interacts with SecA.</text>
</comment>
<comment type="subcellular location">
    <subcellularLocation>
        <location evidence="1">Cell membrane</location>
        <topology evidence="1">Single-pass membrane protein</topology>
    </subcellularLocation>
</comment>
<comment type="similarity">
    <text evidence="1">Belongs to the SecE/SEC61-gamma family.</text>
</comment>
<comment type="sequence caution" evidence="2">
    <conflict type="erroneous initiation">
        <sequence resource="EMBL-CDS" id="ABD29665"/>
    </conflict>
    <text>Extended N-terminus.</text>
</comment>